<dbReference type="EMBL" id="MK766840">
    <property type="protein sequence ID" value="QFZ95566.1"/>
    <property type="molecule type" value="mRNA"/>
</dbReference>
<dbReference type="GO" id="GO:0005576">
    <property type="term" value="C:extracellular region"/>
    <property type="evidence" value="ECO:0007669"/>
    <property type="project" value="UniProtKB-SubCell"/>
</dbReference>
<dbReference type="GO" id="GO:0042742">
    <property type="term" value="P:defense response to bacterium"/>
    <property type="evidence" value="ECO:0007669"/>
    <property type="project" value="UniProtKB-KW"/>
</dbReference>
<dbReference type="GO" id="GO:0050832">
    <property type="term" value="P:defense response to fungus"/>
    <property type="evidence" value="ECO:0007669"/>
    <property type="project" value="UniProtKB-KW"/>
</dbReference>
<dbReference type="GO" id="GO:0045087">
    <property type="term" value="P:innate immune response"/>
    <property type="evidence" value="ECO:0007669"/>
    <property type="project" value="UniProtKB-KW"/>
</dbReference>
<dbReference type="GO" id="GO:0031640">
    <property type="term" value="P:killing of cells of another organism"/>
    <property type="evidence" value="ECO:0007669"/>
    <property type="project" value="UniProtKB-KW"/>
</dbReference>
<dbReference type="InterPro" id="IPR004275">
    <property type="entry name" value="Frog_antimicrobial_propeptide"/>
</dbReference>
<dbReference type="Pfam" id="PF03032">
    <property type="entry name" value="FSAP_sig_propep"/>
    <property type="match status" value="1"/>
</dbReference>
<comment type="function">
    <text evidence="1 2">Antimicrobial peptide active against Gram-positive bacteria and fungi but inactive against Gram-negative bacteria. Also inhibits growth of B.dendrobatidis zoospores at high concentrations. Shows anticancer activities. Shows hemolytic activity.</text>
</comment>
<comment type="subcellular location">
    <subcellularLocation>
        <location evidence="5">Secreted</location>
    </subcellularLocation>
</comment>
<comment type="tissue specificity">
    <text evidence="8">Expressed by the skin glands.</text>
</comment>
<comment type="miscellaneous">
    <text evidence="7">The primary structure of this peptide is identical to that of Phylloseptin-L1 (AC P0DQK9) and of medusin-AS (AC L0P329).</text>
</comment>
<comment type="similarity">
    <text evidence="7">Belongs to the frog skin active peptide (FSAP) family. Medusin subfamily.</text>
</comment>
<comment type="online information" name="The antimicrobial peptide database">
    <link uri="https://wangapd3.com/database/query_output.php?ID=00973"/>
</comment>
<feature type="signal peptide" evidence="3">
    <location>
        <begin position="1"/>
        <end position="22"/>
    </location>
</feature>
<feature type="propeptide" id="PRO_0000449979" evidence="8">
    <location>
        <begin position="23"/>
        <end position="49"/>
    </location>
</feature>
<feature type="peptide" id="PRO_0000449980" description="Medusin-AS" evidence="8">
    <location>
        <begin position="50"/>
        <end position="67"/>
    </location>
</feature>
<feature type="region of interest" description="Disordered" evidence="4">
    <location>
        <begin position="24"/>
        <end position="46"/>
    </location>
</feature>
<feature type="compositionally biased region" description="Acidic residues" evidence="4">
    <location>
        <begin position="31"/>
        <end position="41"/>
    </location>
</feature>
<feature type="modified residue" description="Leucine amide" evidence="1 2">
    <location>
        <position position="67"/>
    </location>
</feature>
<accession>A0A5Q0MU22</accession>
<protein>
    <recommendedName>
        <fullName evidence="6">Medusin-AS</fullName>
        <shortName evidence="7">MDS-AS</shortName>
    </recommendedName>
</protein>
<organism>
    <name type="scientific">Agalychnis spurrelli</name>
    <name type="common">Gliding leaf frog</name>
    <name type="synonym">Agalychnis litodryas</name>
    <dbReference type="NCBI Taxonomy" id="317303"/>
    <lineage>
        <taxon>Eukaryota</taxon>
        <taxon>Metazoa</taxon>
        <taxon>Chordata</taxon>
        <taxon>Craniata</taxon>
        <taxon>Vertebrata</taxon>
        <taxon>Euteleostomi</taxon>
        <taxon>Amphibia</taxon>
        <taxon>Batrachia</taxon>
        <taxon>Anura</taxon>
        <taxon>Neobatrachia</taxon>
        <taxon>Hyloidea</taxon>
        <taxon>Hylidae</taxon>
        <taxon>Phyllomedusinae</taxon>
        <taxon>Agalychnis</taxon>
    </lineage>
</organism>
<name>MDS_AGASP</name>
<sequence>MAFLKKSLFLVLFLGLVSLSVCEEEKRESEEEKNEQEEDDRDERSEEKRLLGMIPLAISAISALSKLG</sequence>
<evidence type="ECO:0000250" key="1">
    <source>
        <dbReference type="UniProtKB" id="L0P329"/>
    </source>
</evidence>
<evidence type="ECO:0000250" key="2">
    <source>
        <dbReference type="UniProtKB" id="P0DQK9"/>
    </source>
</evidence>
<evidence type="ECO:0000255" key="3"/>
<evidence type="ECO:0000256" key="4">
    <source>
        <dbReference type="SAM" id="MobiDB-lite"/>
    </source>
</evidence>
<evidence type="ECO:0000269" key="5">
    <source>
    </source>
</evidence>
<evidence type="ECO:0000303" key="6">
    <source>
    </source>
</evidence>
<evidence type="ECO:0000305" key="7"/>
<evidence type="ECO:0000305" key="8">
    <source>
    </source>
</evidence>
<reference key="1">
    <citation type="journal article" date="2019" name="Biomolecules">
        <title>Unravelling the skin secretion peptides of the gliding leaf frog, Agalychnis spurrelli (Hylidae).</title>
        <authorList>
            <person name="Proano-Bolanos C."/>
            <person name="Blasco-Zuniga A."/>
            <person name="Almeida J.R."/>
            <person name="Wang L."/>
            <person name="Llumiquinga M.A."/>
            <person name="Rivera M."/>
            <person name="Zhou M."/>
            <person name="Chen T."/>
            <person name="Shaw C."/>
        </authorList>
    </citation>
    <scope>NUCLEOTIDE SEQUENCE [MRNA]</scope>
    <scope>IDENTIFICATION BY MASS SPECTROMETRY</scope>
    <scope>SUBCELLULAR LOCATION</scope>
    <source>
        <tissue>Skin secretion</tissue>
    </source>
</reference>
<keyword id="KW-0027">Amidation</keyword>
<keyword id="KW-0878">Amphibian defense peptide</keyword>
<keyword id="KW-0044">Antibiotic</keyword>
<keyword id="KW-0929">Antimicrobial</keyword>
<keyword id="KW-0165">Cleavage on pair of basic residues</keyword>
<keyword id="KW-0295">Fungicide</keyword>
<keyword id="KW-0391">Immunity</keyword>
<keyword id="KW-0399">Innate immunity</keyword>
<keyword id="KW-0964">Secreted</keyword>
<keyword id="KW-0732">Signal</keyword>
<proteinExistence type="evidence at protein level"/>